<organism>
    <name type="scientific">Escherichia coli (strain K12)</name>
    <dbReference type="NCBI Taxonomy" id="83333"/>
    <lineage>
        <taxon>Bacteria</taxon>
        <taxon>Pseudomonadati</taxon>
        <taxon>Pseudomonadota</taxon>
        <taxon>Gammaproteobacteria</taxon>
        <taxon>Enterobacterales</taxon>
        <taxon>Enterobacteriaceae</taxon>
        <taxon>Escherichia</taxon>
    </lineage>
</organism>
<name>YEFM_ECOLI</name>
<proteinExistence type="evidence at protein level"/>
<comment type="function">
    <text evidence="1 2 6 7">Antitoxin component of a type II toxin-antitoxin (TA) system. Antitoxin that counteracts the effect of the YoeB toxin. YefM binds to the promoter region of the yefM-yeoB operon to repress transcription, YeoB acts as a corepressor.</text>
</comment>
<comment type="subunit">
    <text evidence="3 4 6">In solution exists as both a monomer and a dimer; the monomeric state is more predominant. It has been described as being a YefM-YeoB(2) heterotrimer (PubMed:15980067) and as a YefM(2)-YoeB heterotrimer (PubMed:16109374, PubMed:17170003). When complexed with YoeB inhibits the toxin activity.</text>
</comment>
<comment type="induction">
    <text evidence="5 6 8">Represses its own promoter; more strongly repressed by the YefM(2)YoeB heterotrimer. Induced in persister cells. Ectopic expression of Salmonella or Shigella toxin VapC induces the yefM-yoeB operon and also induces Yoeb toxin activity in a Lon protease-dependent manner.</text>
</comment>
<comment type="disruption phenotype">
    <text evidence="2">No visible phenotype under standard growth conditions. Delays Lon protease-dependent lethality upon overexpression of Lon, but does not fully suppress it.</text>
</comment>
<comment type="miscellaneous">
    <text evidence="10 11">Has been described as natively unfolded and proteolytically unstable in vivo (PubMed:14672926), but also as structured following overexpression in vitro (PubMed:17170003). Has a half-life of approximately 1 hour in vivo.</text>
</comment>
<comment type="similarity">
    <text evidence="9">Belongs to the phD/YefM antitoxin family.</text>
</comment>
<accession>P69346</accession>
<accession>P46147</accession>
<accession>P76371</accession>
<evidence type="ECO:0000269" key="1">
    <source>
    </source>
</evidence>
<evidence type="ECO:0000269" key="2">
    <source>
    </source>
</evidence>
<evidence type="ECO:0000269" key="3">
    <source>
    </source>
</evidence>
<evidence type="ECO:0000269" key="4">
    <source>
    </source>
</evidence>
<evidence type="ECO:0000269" key="5">
    <source>
    </source>
</evidence>
<evidence type="ECO:0000269" key="6">
    <source>
    </source>
</evidence>
<evidence type="ECO:0000269" key="7">
    <source>
    </source>
</evidence>
<evidence type="ECO:0000269" key="8">
    <source>
    </source>
</evidence>
<evidence type="ECO:0000305" key="9"/>
<evidence type="ECO:0000305" key="10">
    <source>
    </source>
</evidence>
<evidence type="ECO:0000305" key="11">
    <source>
    </source>
</evidence>
<evidence type="ECO:0007829" key="12">
    <source>
        <dbReference type="PDB" id="2A6Q"/>
    </source>
</evidence>
<protein>
    <recommendedName>
        <fullName>Antitoxin YefM</fullName>
    </recommendedName>
</protein>
<gene>
    <name type="primary">yefM</name>
    <name type="ordered locus">b2017</name>
    <name type="ordered locus">JW5835</name>
</gene>
<reference key="1">
    <citation type="journal article" date="1996" name="DNA Res.">
        <title>A 460-kb DNA sequence of the Escherichia coli K-12 genome corresponding to the 40.1-50.0 min region on the linkage map.</title>
        <authorList>
            <person name="Itoh T."/>
            <person name="Aiba H."/>
            <person name="Baba T."/>
            <person name="Fujita K."/>
            <person name="Hayashi K."/>
            <person name="Inada T."/>
            <person name="Isono K."/>
            <person name="Kasai H."/>
            <person name="Kimura S."/>
            <person name="Kitakawa M."/>
            <person name="Kitagawa M."/>
            <person name="Makino K."/>
            <person name="Miki T."/>
            <person name="Mizobuchi K."/>
            <person name="Mori H."/>
            <person name="Mori T."/>
            <person name="Motomura K."/>
            <person name="Nakade S."/>
            <person name="Nakamura Y."/>
            <person name="Nashimoto H."/>
            <person name="Nishio Y."/>
            <person name="Oshima T."/>
            <person name="Saito N."/>
            <person name="Sampei G."/>
            <person name="Seki Y."/>
            <person name="Sivasundaram S."/>
            <person name="Tagami H."/>
            <person name="Takeda J."/>
            <person name="Takemoto K."/>
            <person name="Wada C."/>
            <person name="Yamamoto Y."/>
            <person name="Horiuchi T."/>
        </authorList>
    </citation>
    <scope>NUCLEOTIDE SEQUENCE [LARGE SCALE GENOMIC DNA]</scope>
    <source>
        <strain>K12 / W3110 / ATCC 27325 / DSM 5911</strain>
    </source>
</reference>
<reference key="2">
    <citation type="journal article" date="1997" name="Science">
        <title>The complete genome sequence of Escherichia coli K-12.</title>
        <authorList>
            <person name="Blattner F.R."/>
            <person name="Plunkett G. III"/>
            <person name="Bloch C.A."/>
            <person name="Perna N.T."/>
            <person name="Burland V."/>
            <person name="Riley M."/>
            <person name="Collado-Vides J."/>
            <person name="Glasner J.D."/>
            <person name="Rode C.K."/>
            <person name="Mayhew G.F."/>
            <person name="Gregor J."/>
            <person name="Davis N.W."/>
            <person name="Kirkpatrick H.A."/>
            <person name="Goeden M.A."/>
            <person name="Rose D.J."/>
            <person name="Mau B."/>
            <person name="Shao Y."/>
        </authorList>
    </citation>
    <scope>NUCLEOTIDE SEQUENCE [LARGE SCALE GENOMIC DNA]</scope>
    <source>
        <strain>K12 / MG1655 / ATCC 47076</strain>
    </source>
</reference>
<reference key="3">
    <citation type="journal article" date="2006" name="Mol. Syst. Biol.">
        <title>Highly accurate genome sequences of Escherichia coli K-12 strains MG1655 and W3110.</title>
        <authorList>
            <person name="Hayashi K."/>
            <person name="Morooka N."/>
            <person name="Yamamoto Y."/>
            <person name="Fujita K."/>
            <person name="Isono K."/>
            <person name="Choi S."/>
            <person name="Ohtsubo E."/>
            <person name="Baba T."/>
            <person name="Wanner B.L."/>
            <person name="Mori H."/>
            <person name="Horiuchi T."/>
        </authorList>
    </citation>
    <scope>NUCLEOTIDE SEQUENCE [LARGE SCALE GENOMIC DNA]</scope>
    <source>
        <strain>K12 / W3110 / ATCC 27325 / DSM 5911</strain>
    </source>
</reference>
<reference key="4">
    <citation type="journal article" date="1981" name="Nucleic Acids Res.">
        <title>Identification, nucleotide sequence and expression of the regulatory region of the histidine operon of Escherichia coli K-12.</title>
        <authorList>
            <person name="Verde P."/>
            <person name="Frunzio R."/>
            <person name="di Nocera P.P."/>
            <person name="Blasi F."/>
            <person name="Bruni C.B."/>
        </authorList>
    </citation>
    <scope>PRELIMINARY PARTIAL NUCLEOTIDE SEQUENCE [GENOMIC DNA]</scope>
</reference>
<reference key="5">
    <citation type="journal article" date="1995" name="Nucleic Acids Res.">
        <title>Detection of new genes in a bacterial genome using Markov models for three gene classes.</title>
        <authorList>
            <person name="Borodovsky M."/>
            <person name="McIninch J."/>
            <person name="Koonin E.V."/>
            <person name="Rudd K.E."/>
            <person name="Medigue C."/>
            <person name="Danchin A."/>
        </authorList>
    </citation>
    <scope>IDENTIFICATION</scope>
</reference>
<reference key="6">
    <citation type="journal article" date="2004" name="J. Biol. Chem.">
        <title>The YefM antitoxin defines a family of natively unfolded proteins: implications as a novel antibacterial target.</title>
        <authorList>
            <person name="Cherny I."/>
            <person name="Gazit E."/>
        </authorList>
    </citation>
    <scope>FUNCTION</scope>
</reference>
<reference key="7">
    <citation type="journal article" date="2004" name="Mol. Microbiol.">
        <title>Overproduction of the Lon protease triggers inhibition of translation in Escherichia coli: involvement of the yefM-yoeB toxin-antitoxin system.</title>
        <authorList>
            <person name="Christensen S.K."/>
            <person name="Maenhaut-Michel G."/>
            <person name="Mine N."/>
            <person name="Gottesman S."/>
            <person name="Gerdes K."/>
            <person name="Van Melderen L."/>
        </authorList>
    </citation>
    <scope>FUNCTION AS AN ANTITOXIN</scope>
    <scope>DISRUPTION PHENOTYPE</scope>
    <source>
        <strain>K12 / MG1655 / ATCC 47076</strain>
    </source>
</reference>
<reference key="8">
    <citation type="journal article" date="2005" name="J. Biol. Chem.">
        <title>The YoeB toxin is a folded protein that forms a physical complex with the unfolded YefM antitoxin. Implications for a structural-based differential stability of toxin-antitoxin systems.</title>
        <authorList>
            <person name="Cherny I."/>
            <person name="Rockah L."/>
            <person name="Gazit E."/>
        </authorList>
    </citation>
    <scope>SUBUNIT</scope>
    <source>
        <strain>K12 / MC1061 / ATCC 53338 / DSM 7140</strain>
    </source>
</reference>
<reference key="9">
    <citation type="journal article" date="2006" name="BMC Microbiol.">
        <title>Persisters: a distinct physiological state of E. coli.</title>
        <authorList>
            <person name="Shah D."/>
            <person name="Zhang Z."/>
            <person name="Khodursky A."/>
            <person name="Kaldalu N."/>
            <person name="Kurg K."/>
            <person name="Lewis K."/>
        </authorList>
    </citation>
    <scope>INDUCTION IN PERSISTER CELLS</scope>
    <source>
        <strain>K12</strain>
    </source>
</reference>
<reference key="10">
    <citation type="journal article" date="2007" name="Nucleic Acids Res.">
        <title>Toxin-antitoxin regulation: bimodal interaction of YefM-YoeB with paired DNA palindromes exerts transcriptional autorepression.</title>
        <authorList>
            <person name="Kedzierska B."/>
            <person name="Lian L.Y."/>
            <person name="Hayes F."/>
        </authorList>
    </citation>
    <scope>FUNCTION AS A TRANSCRIPTIONAL REPRESSOR</scope>
    <scope>DNA-BINDING</scope>
    <scope>SUBUNIT</scope>
    <scope>INDUCTION</scope>
</reference>
<reference key="11">
    <citation type="journal article" date="2009" name="J. Bacteriol.">
        <title>Influence of operator site geometry on transcriptional control by the YefM-YoeB toxin-antitoxin complex.</title>
        <authorList>
            <person name="Bailey S.E."/>
            <person name="Hayes F."/>
        </authorList>
    </citation>
    <scope>FUNCTION AS A TRANSCRIPTIONAL REPRESSOR</scope>
    <scope>DNA-BINDING</scope>
    <scope>MUTAGENESIS OF ARG-10 AND ARG-31</scope>
</reference>
<reference key="12">
    <citation type="journal article" date="2009" name="Mol. Microbiol.">
        <title>Ectopic production of VapCs from Enterobacteria inhibits translation and trans-activates YoeB mRNA interferase.</title>
        <authorList>
            <person name="Winther K.S."/>
            <person name="Gerdes K."/>
        </authorList>
    </citation>
    <scope>INDUCTION BY VAPC</scope>
    <source>
        <strain>K12 / MG1655 / ATCC 47076</strain>
    </source>
</reference>
<reference key="13">
    <citation type="journal article" date="2005" name="Mol. Cell">
        <title>Conformational change in the catalytic site of the ribonuclease YoeB toxin by YefM antitoxin.</title>
        <authorList>
            <person name="Kamada K."/>
            <person name="Hanaoka F."/>
        </authorList>
    </citation>
    <scope>X-RAY CRYSTALLOGRAPHY (2.05 ANGSTROMS) IN COMPLEX WITH YOEB</scope>
    <scope>SUBUNIT</scope>
    <source>
        <strain>K12</strain>
    </source>
</reference>
<keyword id="KW-0002">3D-structure</keyword>
<keyword id="KW-0238">DNA-binding</keyword>
<keyword id="KW-1185">Reference proteome</keyword>
<keyword id="KW-0678">Repressor</keyword>
<keyword id="KW-1277">Toxin-antitoxin system</keyword>
<keyword id="KW-0804">Transcription</keyword>
<keyword id="KW-0805">Transcription regulation</keyword>
<feature type="chain" id="PRO_0000213738" description="Antitoxin YefM">
    <location>
        <begin position="1"/>
        <end position="83"/>
    </location>
</feature>
<feature type="mutagenesis site" description="Loss of DNA-binding and transcriptional repression." evidence="7">
    <original>R</original>
    <variation>A</variation>
    <location>
        <position position="10"/>
    </location>
</feature>
<feature type="mutagenesis site" description="Loss of DNA-binding and transcriptional repression." evidence="7">
    <original>R</original>
    <variation>A</variation>
    <location>
        <position position="31"/>
    </location>
</feature>
<feature type="strand" evidence="12">
    <location>
        <begin position="1"/>
        <end position="5"/>
    </location>
</feature>
<feature type="helix" evidence="12">
    <location>
        <begin position="6"/>
        <end position="11"/>
    </location>
</feature>
<feature type="helix" evidence="12">
    <location>
        <begin position="13"/>
        <end position="23"/>
    </location>
</feature>
<feature type="strand" evidence="12">
    <location>
        <begin position="27"/>
        <end position="30"/>
    </location>
</feature>
<feature type="strand" evidence="12">
    <location>
        <begin position="36"/>
        <end position="41"/>
    </location>
</feature>
<feature type="helix" evidence="12">
    <location>
        <begin position="42"/>
        <end position="56"/>
    </location>
</feature>
<feature type="helix" evidence="12">
    <location>
        <begin position="58"/>
        <end position="72"/>
    </location>
</feature>
<dbReference type="EMBL" id="U00096">
    <property type="protein sequence ID" value="AAC75078.2"/>
    <property type="molecule type" value="Genomic_DNA"/>
</dbReference>
<dbReference type="EMBL" id="AP009048">
    <property type="protein sequence ID" value="BAA15849.2"/>
    <property type="molecule type" value="Genomic_DNA"/>
</dbReference>
<dbReference type="EMBL" id="V00284">
    <property type="status" value="NOT_ANNOTATED_CDS"/>
    <property type="molecule type" value="Genomic_DNA"/>
</dbReference>
<dbReference type="PIR" id="H64966">
    <property type="entry name" value="H64966"/>
</dbReference>
<dbReference type="RefSeq" id="NP_416521.2">
    <property type="nucleotide sequence ID" value="NC_000913.3"/>
</dbReference>
<dbReference type="RefSeq" id="WP_001259255.1">
    <property type="nucleotide sequence ID" value="NZ_STEB01000048.1"/>
</dbReference>
<dbReference type="PDB" id="2A6Q">
    <property type="method" value="X-ray"/>
    <property type="resolution" value="2.05 A"/>
    <property type="chains" value="A/B/C/D=1-83"/>
</dbReference>
<dbReference type="PDBsum" id="2A6Q"/>
<dbReference type="SMR" id="P69346"/>
<dbReference type="BioGRID" id="4263534">
    <property type="interactions" value="200"/>
</dbReference>
<dbReference type="BioGRID" id="850889">
    <property type="interactions" value="1"/>
</dbReference>
<dbReference type="ComplexPortal" id="CPX-1087">
    <property type="entry name" value="YoeB-YefM toxin-antitoxin complex"/>
</dbReference>
<dbReference type="FunCoup" id="P69346">
    <property type="interactions" value="5"/>
</dbReference>
<dbReference type="IntAct" id="P69346">
    <property type="interactions" value="1"/>
</dbReference>
<dbReference type="MINT" id="P69346"/>
<dbReference type="STRING" id="511145.b2017"/>
<dbReference type="ChEMBL" id="CHEMBL3309007"/>
<dbReference type="PaxDb" id="511145-b2017"/>
<dbReference type="EnsemblBacteria" id="AAC75078">
    <property type="protein sequence ID" value="AAC75078"/>
    <property type="gene ID" value="b2017"/>
</dbReference>
<dbReference type="GeneID" id="93775156"/>
<dbReference type="GeneID" id="946542"/>
<dbReference type="KEGG" id="ecj:JW5835"/>
<dbReference type="KEGG" id="eco:b2017"/>
<dbReference type="KEGG" id="ecoc:C3026_11380"/>
<dbReference type="PATRIC" id="fig|1411691.4.peg.234"/>
<dbReference type="EchoBASE" id="EB2693"/>
<dbReference type="eggNOG" id="COG2161">
    <property type="taxonomic scope" value="Bacteria"/>
</dbReference>
<dbReference type="HOGENOM" id="CLU_155837_1_0_6"/>
<dbReference type="InParanoid" id="P69346"/>
<dbReference type="OMA" id="MDAISYT"/>
<dbReference type="OrthoDB" id="9802003at2"/>
<dbReference type="PhylomeDB" id="P69346"/>
<dbReference type="BioCyc" id="EcoCyc:EG12844-MONOMER"/>
<dbReference type="BioCyc" id="MetaCyc:EG12844-MONOMER"/>
<dbReference type="EvolutionaryTrace" id="P69346"/>
<dbReference type="PRO" id="PR:P69346"/>
<dbReference type="Proteomes" id="UP000000625">
    <property type="component" value="Chromosome"/>
</dbReference>
<dbReference type="GO" id="GO:0110001">
    <property type="term" value="C:toxin-antitoxin complex"/>
    <property type="evidence" value="ECO:0000353"/>
    <property type="project" value="ComplexPortal"/>
</dbReference>
<dbReference type="GO" id="GO:0003700">
    <property type="term" value="F:DNA-binding transcription factor activity"/>
    <property type="evidence" value="ECO:0000318"/>
    <property type="project" value="GO_Central"/>
</dbReference>
<dbReference type="GO" id="GO:0042803">
    <property type="term" value="F:protein homodimerization activity"/>
    <property type="evidence" value="ECO:0000314"/>
    <property type="project" value="EcoCyc"/>
</dbReference>
<dbReference type="GO" id="GO:0043565">
    <property type="term" value="F:sequence-specific DNA binding"/>
    <property type="evidence" value="ECO:0000314"/>
    <property type="project" value="UniProtKB"/>
</dbReference>
<dbReference type="GO" id="GO:0015643">
    <property type="term" value="F:toxic substance binding"/>
    <property type="evidence" value="ECO:0000314"/>
    <property type="project" value="UniProtKB"/>
</dbReference>
<dbReference type="GO" id="GO:0045892">
    <property type="term" value="P:negative regulation of DNA-templated transcription"/>
    <property type="evidence" value="ECO:0000314"/>
    <property type="project" value="UniProtKB"/>
</dbReference>
<dbReference type="GO" id="GO:0006355">
    <property type="term" value="P:regulation of DNA-templated transcription"/>
    <property type="evidence" value="ECO:0000318"/>
    <property type="project" value="GO_Central"/>
</dbReference>
<dbReference type="GO" id="GO:0040008">
    <property type="term" value="P:regulation of growth"/>
    <property type="evidence" value="ECO:0000303"/>
    <property type="project" value="ComplexPortal"/>
</dbReference>
<dbReference type="GO" id="GO:0044010">
    <property type="term" value="P:single-species biofilm formation"/>
    <property type="evidence" value="ECO:0000315"/>
    <property type="project" value="EcoCyc"/>
</dbReference>
<dbReference type="DisProt" id="DP01488"/>
<dbReference type="FunFam" id="3.40.1620.10:FF:000001">
    <property type="entry name" value="Antitoxin"/>
    <property type="match status" value="1"/>
</dbReference>
<dbReference type="Gene3D" id="6.10.250.330">
    <property type="match status" value="1"/>
</dbReference>
<dbReference type="Gene3D" id="3.40.1620.10">
    <property type="entry name" value="YefM-like domain"/>
    <property type="match status" value="1"/>
</dbReference>
<dbReference type="InterPro" id="IPR006442">
    <property type="entry name" value="Antitoxin_Phd/YefM"/>
</dbReference>
<dbReference type="InterPro" id="IPR051405">
    <property type="entry name" value="phD/YefM_antitoxin"/>
</dbReference>
<dbReference type="InterPro" id="IPR036165">
    <property type="entry name" value="YefM-like_sf"/>
</dbReference>
<dbReference type="NCBIfam" id="TIGR01552">
    <property type="entry name" value="phd_fam"/>
    <property type="match status" value="1"/>
</dbReference>
<dbReference type="NCBIfam" id="NF008499">
    <property type="entry name" value="PRK11409.1"/>
    <property type="match status" value="1"/>
</dbReference>
<dbReference type="PANTHER" id="PTHR33713">
    <property type="entry name" value="ANTITOXIN YAFN-RELATED"/>
    <property type="match status" value="1"/>
</dbReference>
<dbReference type="PANTHER" id="PTHR33713:SF6">
    <property type="entry name" value="ANTITOXIN YEFM"/>
    <property type="match status" value="1"/>
</dbReference>
<dbReference type="Pfam" id="PF02604">
    <property type="entry name" value="PhdYeFM_antitox"/>
    <property type="match status" value="1"/>
</dbReference>
<dbReference type="SUPFAM" id="SSF143120">
    <property type="entry name" value="YefM-like"/>
    <property type="match status" value="1"/>
</dbReference>
<sequence>MRTISYSEARQNLSATMMKAVEDHAPILITRQNGEACVLMSLEEYNSLEETAYLLRSPANARRLMDSIDSLKSGKGTEKDIIE</sequence>